<dbReference type="EC" id="3.2.1.-" evidence="1"/>
<dbReference type="EMBL" id="AE014074">
    <property type="protein sequence ID" value="AAM79463.1"/>
    <property type="status" value="ALT_INIT"/>
    <property type="molecule type" value="Genomic_DNA"/>
</dbReference>
<dbReference type="RefSeq" id="WP_009880444.1">
    <property type="nucleotide sequence ID" value="NC_004070.1"/>
</dbReference>
<dbReference type="SMR" id="P0DC28"/>
<dbReference type="KEGG" id="spg:SpyM3_0856"/>
<dbReference type="HOGENOM" id="CLU_046550_2_1_9"/>
<dbReference type="Proteomes" id="UP000000564">
    <property type="component" value="Chromosome"/>
</dbReference>
<dbReference type="GO" id="GO:0016798">
    <property type="term" value="F:hydrolase activity, acting on glycosyl bonds"/>
    <property type="evidence" value="ECO:0007669"/>
    <property type="project" value="UniProtKB-KW"/>
</dbReference>
<dbReference type="CDD" id="cd02908">
    <property type="entry name" value="Macro_OAADPr_deacetylase"/>
    <property type="match status" value="1"/>
</dbReference>
<dbReference type="FunFam" id="3.40.220.10:FF:000018">
    <property type="entry name" value="Protein-ADP-ribose hydrolase"/>
    <property type="match status" value="1"/>
</dbReference>
<dbReference type="Gene3D" id="3.40.220.10">
    <property type="entry name" value="Leucine Aminopeptidase, subunit E, domain 1"/>
    <property type="match status" value="1"/>
</dbReference>
<dbReference type="InterPro" id="IPR002589">
    <property type="entry name" value="Macro_dom"/>
</dbReference>
<dbReference type="InterPro" id="IPR043472">
    <property type="entry name" value="Macro_dom-like"/>
</dbReference>
<dbReference type="NCBIfam" id="NF003163">
    <property type="entry name" value="PRK04143.1"/>
    <property type="match status" value="1"/>
</dbReference>
<dbReference type="PANTHER" id="PTHR11106:SF121">
    <property type="entry name" value="ADP-RIBOSE 1''-PHOSPHATE PHOSPHATASE"/>
    <property type="match status" value="1"/>
</dbReference>
<dbReference type="PANTHER" id="PTHR11106">
    <property type="entry name" value="GANGLIOSIDE INDUCED DIFFERENTIATION ASSOCIATED PROTEIN 2-RELATED"/>
    <property type="match status" value="1"/>
</dbReference>
<dbReference type="Pfam" id="PF01661">
    <property type="entry name" value="Macro"/>
    <property type="match status" value="1"/>
</dbReference>
<dbReference type="SMART" id="SM00506">
    <property type="entry name" value="A1pp"/>
    <property type="match status" value="1"/>
</dbReference>
<dbReference type="SUPFAM" id="SSF52949">
    <property type="entry name" value="Macro domain-like"/>
    <property type="match status" value="1"/>
</dbReference>
<dbReference type="PROSITE" id="PS51154">
    <property type="entry name" value="MACRO"/>
    <property type="match status" value="1"/>
</dbReference>
<comment type="function">
    <text evidence="1">ADP-ribosylhydrolase that specifically reverses the SirTM-mediated mono-ADP-ribosylation at an asparatate residue of GcvH-L, by releasing ADP-ribose from the target protein (By similarity). May play a role in the regulation of the response to host-induced oxidative stress (By similarity).</text>
</comment>
<comment type="catalytic activity">
    <reaction evidence="1">
        <text>4-O-(ADP-D-ribosyl)-L-aspartyl-[protein] + H2O = L-aspartyl-[protein] + ADP-D-ribose + H(+)</text>
        <dbReference type="Rhea" id="RHEA:54428"/>
        <dbReference type="Rhea" id="RHEA-COMP:9867"/>
        <dbReference type="Rhea" id="RHEA-COMP:13832"/>
        <dbReference type="ChEBI" id="CHEBI:15377"/>
        <dbReference type="ChEBI" id="CHEBI:15378"/>
        <dbReference type="ChEBI" id="CHEBI:29961"/>
        <dbReference type="ChEBI" id="CHEBI:57967"/>
        <dbReference type="ChEBI" id="CHEBI:138102"/>
    </reaction>
    <physiologicalReaction direction="left-to-right" evidence="1">
        <dbReference type="Rhea" id="RHEA:54429"/>
    </physiologicalReaction>
</comment>
<comment type="cofactor">
    <cofactor evidence="1">
        <name>Zn(2+)</name>
        <dbReference type="ChEBI" id="CHEBI:29105"/>
    </cofactor>
    <text evidence="1">Binds 1 Zn(2+) ion per subunit.</text>
</comment>
<comment type="similarity">
    <text evidence="3">Belongs to the MacroD-type family. Zn-Macro subfamily.</text>
</comment>
<comment type="sequence caution" evidence="3">
    <conflict type="erroneous initiation">
        <sequence resource="EMBL-CDS" id="AAM79463"/>
    </conflict>
    <text>Truncated N-terminus.</text>
</comment>
<sequence length="270" mass="30055">MPSSFDLLGEMIGLLQTEQLTSSWACPLPNALTKRQDLWRALINQRPALPLSKDYLNLEDAYLDDWRASFVPVSVKDCQKTNYTSLFLYHGDIRYLAVDAIVNAANSELLGCFIPNHGCIDNAIHTFAGSRLRLACQAIMTEQGRKEAIGQAKLTSAYHLPASYIIHTVGPRITKGHHVSPIRADLLARCYRSSLDLAVKAGLTSLAFCSISTGEFGFPKKEAAQIAIKTVLKWQAEHPESKTLTIIFNTFTSEDKALYDTYLQKENNCE</sequence>
<organism>
    <name type="scientific">Streptococcus pyogenes serotype M3 (strain ATCC BAA-595 / MGAS315)</name>
    <dbReference type="NCBI Taxonomy" id="198466"/>
    <lineage>
        <taxon>Bacteria</taxon>
        <taxon>Bacillati</taxon>
        <taxon>Bacillota</taxon>
        <taxon>Bacilli</taxon>
        <taxon>Lactobacillales</taxon>
        <taxon>Streptococcaceae</taxon>
        <taxon>Streptococcus</taxon>
    </lineage>
</organism>
<evidence type="ECO:0000250" key="1">
    <source>
        <dbReference type="UniProtKB" id="P0DN70"/>
    </source>
</evidence>
<evidence type="ECO:0000255" key="2">
    <source>
        <dbReference type="PROSITE-ProRule" id="PRU00490"/>
    </source>
</evidence>
<evidence type="ECO:0000305" key="3"/>
<feature type="chain" id="PRO_0000089218" description="Protein-ADP-ribose hydrolase">
    <location>
        <begin position="1"/>
        <end position="270"/>
    </location>
</feature>
<feature type="domain" description="Macro" evidence="2">
    <location>
        <begin position="73"/>
        <end position="267"/>
    </location>
</feature>
<feature type="binding site" evidence="1">
    <location>
        <position position="92"/>
    </location>
    <ligand>
        <name>ADP-D-ribose</name>
        <dbReference type="ChEBI" id="CHEBI:57967"/>
    </ligand>
</feature>
<feature type="binding site" evidence="1">
    <location>
        <position position="93"/>
    </location>
    <ligand>
        <name>ADP-D-ribose</name>
        <dbReference type="ChEBI" id="CHEBI:57967"/>
    </ligand>
</feature>
<feature type="binding site" evidence="1">
    <location>
        <position position="106"/>
    </location>
    <ligand>
        <name>ADP-D-ribose</name>
        <dbReference type="ChEBI" id="CHEBI:57967"/>
    </ligand>
</feature>
<feature type="binding site" evidence="1">
    <location>
        <position position="112"/>
    </location>
    <ligand>
        <name>Zn(2+)</name>
        <dbReference type="ChEBI" id="CHEBI:29105"/>
    </ligand>
</feature>
<feature type="binding site" evidence="1">
    <location>
        <position position="117"/>
    </location>
    <ligand>
        <name>Zn(2+)</name>
        <dbReference type="ChEBI" id="CHEBI:29105"/>
    </ligand>
</feature>
<feature type="binding site" evidence="1">
    <location>
        <position position="119"/>
    </location>
    <ligand>
        <name>ADP-D-ribose</name>
        <dbReference type="ChEBI" id="CHEBI:57967"/>
    </ligand>
</feature>
<feature type="binding site" evidence="1">
    <location>
        <position position="119"/>
    </location>
    <ligand>
        <name>Zn(2+)</name>
        <dbReference type="ChEBI" id="CHEBI:29105"/>
    </ligand>
</feature>
<feature type="binding site" evidence="1">
    <location>
        <position position="120"/>
    </location>
    <ligand>
        <name>ADP-D-ribose</name>
        <dbReference type="ChEBI" id="CHEBI:57967"/>
    </ligand>
</feature>
<feature type="binding site" evidence="1">
    <location>
        <position position="121"/>
    </location>
    <ligand>
        <name>ADP-D-ribose</name>
        <dbReference type="ChEBI" id="CHEBI:57967"/>
    </ligand>
</feature>
<feature type="binding site" evidence="1">
    <location>
        <position position="212"/>
    </location>
    <ligand>
        <name>ADP-D-ribose</name>
        <dbReference type="ChEBI" id="CHEBI:57967"/>
    </ligand>
</feature>
<feature type="binding site" evidence="1">
    <location>
        <position position="213"/>
    </location>
    <ligand>
        <name>ADP-D-ribose</name>
        <dbReference type="ChEBI" id="CHEBI:57967"/>
    </ligand>
</feature>
<feature type="binding site" evidence="1">
    <location>
        <position position="214"/>
    </location>
    <ligand>
        <name>ADP-D-ribose</name>
        <dbReference type="ChEBI" id="CHEBI:57967"/>
    </ligand>
</feature>
<feature type="binding site" evidence="1">
    <location>
        <position position="215"/>
    </location>
    <ligand>
        <name>ADP-D-ribose</name>
        <dbReference type="ChEBI" id="CHEBI:57967"/>
    </ligand>
</feature>
<feature type="binding site" evidence="1">
    <location>
        <position position="216"/>
    </location>
    <ligand>
        <name>ADP-D-ribose</name>
        <dbReference type="ChEBI" id="CHEBI:57967"/>
    </ligand>
</feature>
<protein>
    <recommendedName>
        <fullName evidence="1">Protein-ADP-ribose hydrolase</fullName>
        <ecNumber evidence="1">3.2.1.-</ecNumber>
    </recommendedName>
</protein>
<gene>
    <name type="ordered locus">SpyM3_0856</name>
</gene>
<name>ADPRH_STRP3</name>
<proteinExistence type="inferred from homology"/>
<reference key="1">
    <citation type="journal article" date="2002" name="Proc. Natl. Acad. Sci. U.S.A.">
        <title>Genome sequence of a serotype M3 strain of group A Streptococcus: phage-encoded toxins, the high-virulence phenotype, and clone emergence.</title>
        <authorList>
            <person name="Beres S.B."/>
            <person name="Sylva G.L."/>
            <person name="Barbian K.D."/>
            <person name="Lei B."/>
            <person name="Hoff J.S."/>
            <person name="Mammarella N.D."/>
            <person name="Liu M.-Y."/>
            <person name="Smoot J.C."/>
            <person name="Porcella S.F."/>
            <person name="Parkins L.D."/>
            <person name="Campbell D.S."/>
            <person name="Smith T.M."/>
            <person name="McCormick J.K."/>
            <person name="Leung D.Y.M."/>
            <person name="Schlievert P.M."/>
            <person name="Musser J.M."/>
        </authorList>
    </citation>
    <scope>NUCLEOTIDE SEQUENCE [LARGE SCALE GENOMIC DNA]</scope>
    <source>
        <strain>ATCC BAA-595 / MGAS315</strain>
    </source>
</reference>
<keyword id="KW-0326">Glycosidase</keyword>
<keyword id="KW-0378">Hydrolase</keyword>
<keyword id="KW-0479">Metal-binding</keyword>
<keyword id="KW-0862">Zinc</keyword>
<accession>P0DC28</accession>
<accession>Q8K7D8</accession>